<gene>
    <name evidence="1" type="primary">hmgA</name>
    <name type="ordered locus">lpg1285</name>
</gene>
<comment type="function">
    <text evidence="1">Involved in the catabolism of homogentisate (2,5-dihydroxyphenylacetate or 2,5-OH-PhAc), a central intermediate in the degradation of phenylalanine and tyrosine. Catalyzes the oxidative ring cleavage of the aromatic ring of homogentisate to yield maleylacetoacetate.</text>
</comment>
<comment type="catalytic activity">
    <reaction evidence="1">
        <text>homogentisate + O2 = 4-maleylacetoacetate + H(+)</text>
        <dbReference type="Rhea" id="RHEA:15449"/>
        <dbReference type="ChEBI" id="CHEBI:15378"/>
        <dbReference type="ChEBI" id="CHEBI:15379"/>
        <dbReference type="ChEBI" id="CHEBI:16169"/>
        <dbReference type="ChEBI" id="CHEBI:17105"/>
        <dbReference type="EC" id="1.13.11.5"/>
    </reaction>
</comment>
<comment type="cofactor">
    <cofactor evidence="1">
        <name>Fe cation</name>
        <dbReference type="ChEBI" id="CHEBI:24875"/>
    </cofactor>
</comment>
<comment type="pathway">
    <text evidence="1">Amino-acid degradation; L-phenylalanine degradation; acetoacetate and fumarate from L-phenylalanine: step 4/6.</text>
</comment>
<comment type="subunit">
    <text evidence="1">Hexamer; dimer of trimers.</text>
</comment>
<comment type="similarity">
    <text evidence="1">Belongs to the homogentisate dioxygenase family.</text>
</comment>
<comment type="sequence caution" evidence="2">
    <conflict type="erroneous initiation">
        <sequence resource="EMBL-CDS" id="AAD51397"/>
    </conflict>
    <text>Truncated N-terminus.</text>
</comment>
<feature type="chain" id="PRO_0000220248" description="Homogentisate 1,2-dioxygenase">
    <location>
        <begin position="1"/>
        <end position="416"/>
    </location>
</feature>
<feature type="active site" description="Proton acceptor" evidence="1">
    <location>
        <position position="275"/>
    </location>
</feature>
<feature type="binding site" evidence="1">
    <location>
        <position position="318"/>
    </location>
    <ligand>
        <name>Fe cation</name>
        <dbReference type="ChEBI" id="CHEBI:24875"/>
    </ligand>
</feature>
<feature type="binding site" evidence="1">
    <location>
        <position position="324"/>
    </location>
    <ligand>
        <name>Fe cation</name>
        <dbReference type="ChEBI" id="CHEBI:24875"/>
    </ligand>
</feature>
<feature type="binding site" evidence="1">
    <location>
        <position position="333"/>
    </location>
    <ligand>
        <name>homogentisate</name>
        <dbReference type="ChEBI" id="CHEBI:16169"/>
    </ligand>
</feature>
<feature type="binding site" evidence="1">
    <location>
        <position position="354"/>
    </location>
    <ligand>
        <name>Fe cation</name>
        <dbReference type="ChEBI" id="CHEBI:24875"/>
    </ligand>
</feature>
<feature type="binding site" evidence="1">
    <location>
        <position position="354"/>
    </location>
    <ligand>
        <name>homogentisate</name>
        <dbReference type="ChEBI" id="CHEBI:16169"/>
    </ligand>
</feature>
<organism>
    <name type="scientific">Legionella pneumophila subsp. pneumophila (strain Philadelphia 1 / ATCC 33152 / DSM 7513)</name>
    <dbReference type="NCBI Taxonomy" id="272624"/>
    <lineage>
        <taxon>Bacteria</taxon>
        <taxon>Pseudomonadati</taxon>
        <taxon>Pseudomonadota</taxon>
        <taxon>Gammaproteobacteria</taxon>
        <taxon>Legionellales</taxon>
        <taxon>Legionellaceae</taxon>
        <taxon>Legionella</taxon>
    </lineage>
</organism>
<dbReference type="EC" id="1.13.11.5" evidence="1"/>
<dbReference type="EMBL" id="AF117715">
    <property type="protein sequence ID" value="AAD51397.1"/>
    <property type="status" value="ALT_INIT"/>
    <property type="molecule type" value="Genomic_DNA"/>
</dbReference>
<dbReference type="EMBL" id="AE017354">
    <property type="protein sequence ID" value="AAU27368.1"/>
    <property type="molecule type" value="Genomic_DNA"/>
</dbReference>
<dbReference type="RefSeq" id="WP_010947016.1">
    <property type="nucleotide sequence ID" value="NC_002942.5"/>
</dbReference>
<dbReference type="RefSeq" id="YP_095315.1">
    <property type="nucleotide sequence ID" value="NC_002942.5"/>
</dbReference>
<dbReference type="SMR" id="Q9S4T0"/>
<dbReference type="STRING" id="272624.lpg1285"/>
<dbReference type="PaxDb" id="272624-lpg1285"/>
<dbReference type="GeneID" id="57035277"/>
<dbReference type="KEGG" id="lpn:lpg1285"/>
<dbReference type="PATRIC" id="fig|272624.6.peg.1353"/>
<dbReference type="eggNOG" id="COG3508">
    <property type="taxonomic scope" value="Bacteria"/>
</dbReference>
<dbReference type="HOGENOM" id="CLU_027174_0_0_6"/>
<dbReference type="OrthoDB" id="9811253at2"/>
<dbReference type="UniPathway" id="UPA00139">
    <property type="reaction ID" value="UER00339"/>
</dbReference>
<dbReference type="Proteomes" id="UP000000609">
    <property type="component" value="Chromosome"/>
</dbReference>
<dbReference type="GO" id="GO:0005737">
    <property type="term" value="C:cytoplasm"/>
    <property type="evidence" value="ECO:0007669"/>
    <property type="project" value="TreeGrafter"/>
</dbReference>
<dbReference type="GO" id="GO:0004411">
    <property type="term" value="F:homogentisate 1,2-dioxygenase activity"/>
    <property type="evidence" value="ECO:0007669"/>
    <property type="project" value="UniProtKB-UniRule"/>
</dbReference>
<dbReference type="GO" id="GO:0005506">
    <property type="term" value="F:iron ion binding"/>
    <property type="evidence" value="ECO:0007669"/>
    <property type="project" value="UniProtKB-UniRule"/>
</dbReference>
<dbReference type="GO" id="GO:0006559">
    <property type="term" value="P:L-phenylalanine catabolic process"/>
    <property type="evidence" value="ECO:0007669"/>
    <property type="project" value="UniProtKB-UniRule"/>
</dbReference>
<dbReference type="GO" id="GO:0006572">
    <property type="term" value="P:tyrosine catabolic process"/>
    <property type="evidence" value="ECO:0007669"/>
    <property type="project" value="UniProtKB-UniRule"/>
</dbReference>
<dbReference type="CDD" id="cd07000">
    <property type="entry name" value="cupin_HGO_N"/>
    <property type="match status" value="1"/>
</dbReference>
<dbReference type="FunFam" id="2.60.120.10:FF:000034">
    <property type="entry name" value="Homogentisate 1,2-dioxygenase"/>
    <property type="match status" value="1"/>
</dbReference>
<dbReference type="Gene3D" id="2.60.120.10">
    <property type="entry name" value="Jelly Rolls"/>
    <property type="match status" value="1"/>
</dbReference>
<dbReference type="HAMAP" id="MF_00334">
    <property type="entry name" value="Homogentis_dioxygen"/>
    <property type="match status" value="1"/>
</dbReference>
<dbReference type="InterPro" id="IPR046451">
    <property type="entry name" value="HgmA_C"/>
</dbReference>
<dbReference type="InterPro" id="IPR046452">
    <property type="entry name" value="HgmA_N"/>
</dbReference>
<dbReference type="InterPro" id="IPR005708">
    <property type="entry name" value="Homogentis_dOase"/>
</dbReference>
<dbReference type="InterPro" id="IPR022950">
    <property type="entry name" value="Homogentis_dOase_bac"/>
</dbReference>
<dbReference type="InterPro" id="IPR014710">
    <property type="entry name" value="RmlC-like_jellyroll"/>
</dbReference>
<dbReference type="InterPro" id="IPR011051">
    <property type="entry name" value="RmlC_Cupin_sf"/>
</dbReference>
<dbReference type="NCBIfam" id="TIGR01015">
    <property type="entry name" value="hmgA"/>
    <property type="match status" value="1"/>
</dbReference>
<dbReference type="PANTHER" id="PTHR11056">
    <property type="entry name" value="HOMOGENTISATE 1,2-DIOXYGENASE"/>
    <property type="match status" value="1"/>
</dbReference>
<dbReference type="PANTHER" id="PTHR11056:SF0">
    <property type="entry name" value="HOMOGENTISATE 1,2-DIOXYGENASE"/>
    <property type="match status" value="1"/>
</dbReference>
<dbReference type="Pfam" id="PF04209">
    <property type="entry name" value="HgmA_C"/>
    <property type="match status" value="1"/>
</dbReference>
<dbReference type="Pfam" id="PF20510">
    <property type="entry name" value="HgmA_N"/>
    <property type="match status" value="1"/>
</dbReference>
<dbReference type="SUPFAM" id="SSF51182">
    <property type="entry name" value="RmlC-like cupins"/>
    <property type="match status" value="1"/>
</dbReference>
<reference key="1">
    <citation type="journal article" date="1999" name="J. Bacteriol.">
        <title>The Legionella pneumophila rpoS gene is required for growth within Acanthamoeba castellanii.</title>
        <authorList>
            <person name="Hales L.M."/>
            <person name="Shuman H.A."/>
        </authorList>
    </citation>
    <scope>NUCLEOTIDE SEQUENCE [GENOMIC DNA]</scope>
</reference>
<reference key="2">
    <citation type="journal article" date="2004" name="Science">
        <title>The genomic sequence of the accidental pathogen Legionella pneumophila.</title>
        <authorList>
            <person name="Chien M."/>
            <person name="Morozova I."/>
            <person name="Shi S."/>
            <person name="Sheng H."/>
            <person name="Chen J."/>
            <person name="Gomez S.M."/>
            <person name="Asamani G."/>
            <person name="Hill K."/>
            <person name="Nuara J."/>
            <person name="Feder M."/>
            <person name="Rineer J."/>
            <person name="Greenberg J.J."/>
            <person name="Steshenko V."/>
            <person name="Park S.H."/>
            <person name="Zhao B."/>
            <person name="Teplitskaya E."/>
            <person name="Edwards J.R."/>
            <person name="Pampou S."/>
            <person name="Georghiou A."/>
            <person name="Chou I.-C."/>
            <person name="Iannuccilli W."/>
            <person name="Ulz M.E."/>
            <person name="Kim D.H."/>
            <person name="Geringer-Sameth A."/>
            <person name="Goldsberry C."/>
            <person name="Morozov P."/>
            <person name="Fischer S.G."/>
            <person name="Segal G."/>
            <person name="Qu X."/>
            <person name="Rzhetsky A."/>
            <person name="Zhang P."/>
            <person name="Cayanis E."/>
            <person name="De Jong P.J."/>
            <person name="Ju J."/>
            <person name="Kalachikov S."/>
            <person name="Shuman H.A."/>
            <person name="Russo J.J."/>
        </authorList>
    </citation>
    <scope>NUCLEOTIDE SEQUENCE [LARGE SCALE GENOMIC DNA]</scope>
    <source>
        <strain>Philadelphia 1 / ATCC 33152 / DSM 7513</strain>
    </source>
</reference>
<keyword id="KW-0223">Dioxygenase</keyword>
<keyword id="KW-0408">Iron</keyword>
<keyword id="KW-0479">Metal-binding</keyword>
<keyword id="KW-0560">Oxidoreductase</keyword>
<keyword id="KW-0585">Phenylalanine catabolism</keyword>
<keyword id="KW-1185">Reference proteome</keyword>
<keyword id="KW-0828">Tyrosine catabolism</keyword>
<name>HGD_LEGPH</name>
<proteinExistence type="inferred from homology"/>
<protein>
    <recommendedName>
        <fullName evidence="1">Homogentisate 1,2-dioxygenase</fullName>
        <shortName evidence="1">HGDO</shortName>
        <ecNumber evidence="1">1.13.11.5</ecNumber>
    </recommendedName>
    <alternativeName>
        <fullName evidence="1">Homogentisate oxygenase</fullName>
    </alternativeName>
    <alternativeName>
        <fullName evidence="1">Homogentisic acid oxidase</fullName>
    </alternativeName>
    <alternativeName>
        <fullName evidence="1">Homogentisicase</fullName>
    </alternativeName>
</protein>
<sequence length="416" mass="47475">MYLQGFGNYHHSEAVKGALPPNQNSPQHCSLGLYAEQLSGTAFTRPRHNNLRSWLYRILPTVTQGTYYPYEFNIMQPFVDELSPNAMRWSPLYNSSQIKCDFVEGLFHIAGSPLVNTYTYYCNHSMSDKYFANNDGELLFVPYAGEIHLHTEFGKLMLSSGSIAVIPRGVKFKVEVISKEAKGYLCENSGNPLTLPQLGPIGANGLANPRHFQYPVAAFENSGSEHTIICKNQKKLWFTVCNHSPLNVVAWHGNYAPYCYDLSLFNTINTVSFDHPDPSIFTVLTSESEIPGVSNLDFVIFPPRWMVAEHTFRPPYFHRNYMNELMGLVYGEYDAKKEGFIPGGISIHNCMTPHGPDYESYEIAASQDLKPNYINSLAFMFETKDYWQVTEQAYRHPSRQMDYLNCWQGFKIEFSQ</sequence>
<accession>Q9S4T0</accession>
<accession>Q5ZW03</accession>
<evidence type="ECO:0000255" key="1">
    <source>
        <dbReference type="HAMAP-Rule" id="MF_00334"/>
    </source>
</evidence>
<evidence type="ECO:0000305" key="2"/>